<evidence type="ECO:0000255" key="1">
    <source>
        <dbReference type="HAMAP-Rule" id="MF_00446"/>
    </source>
</evidence>
<protein>
    <recommendedName>
        <fullName evidence="1">Aspartate 1-decarboxylase</fullName>
        <ecNumber evidence="1">4.1.1.11</ecNumber>
    </recommendedName>
    <alternativeName>
        <fullName evidence="1">Aspartate alpha-decarboxylase</fullName>
    </alternativeName>
    <component>
        <recommendedName>
            <fullName evidence="1">Aspartate 1-decarboxylase beta chain</fullName>
        </recommendedName>
    </component>
    <component>
        <recommendedName>
            <fullName evidence="1">Aspartate 1-decarboxylase alpha chain</fullName>
        </recommendedName>
    </component>
</protein>
<reference key="1">
    <citation type="submission" date="2008-04" db="EMBL/GenBank/DDBJ databases">
        <title>Complete sequence of Yersinia pseudotuberculosis PB1/+.</title>
        <authorList>
            <person name="Copeland A."/>
            <person name="Lucas S."/>
            <person name="Lapidus A."/>
            <person name="Glavina del Rio T."/>
            <person name="Dalin E."/>
            <person name="Tice H."/>
            <person name="Bruce D."/>
            <person name="Goodwin L."/>
            <person name="Pitluck S."/>
            <person name="Munk A.C."/>
            <person name="Brettin T."/>
            <person name="Detter J.C."/>
            <person name="Han C."/>
            <person name="Tapia R."/>
            <person name="Schmutz J."/>
            <person name="Larimer F."/>
            <person name="Land M."/>
            <person name="Hauser L."/>
            <person name="Challacombe J.F."/>
            <person name="Green L."/>
            <person name="Lindler L.E."/>
            <person name="Nikolich M.P."/>
            <person name="Richardson P."/>
        </authorList>
    </citation>
    <scope>NUCLEOTIDE SEQUENCE [LARGE SCALE GENOMIC DNA]</scope>
    <source>
        <strain>PB1/+</strain>
    </source>
</reference>
<organism>
    <name type="scientific">Yersinia pseudotuberculosis serotype IB (strain PB1/+)</name>
    <dbReference type="NCBI Taxonomy" id="502801"/>
    <lineage>
        <taxon>Bacteria</taxon>
        <taxon>Pseudomonadati</taxon>
        <taxon>Pseudomonadota</taxon>
        <taxon>Gammaproteobacteria</taxon>
        <taxon>Enterobacterales</taxon>
        <taxon>Yersiniaceae</taxon>
        <taxon>Yersinia</taxon>
    </lineage>
</organism>
<dbReference type="EC" id="4.1.1.11" evidence="1"/>
<dbReference type="EMBL" id="CP001048">
    <property type="protein sequence ID" value="ACC87743.1"/>
    <property type="molecule type" value="Genomic_DNA"/>
</dbReference>
<dbReference type="RefSeq" id="WP_011191751.1">
    <property type="nucleotide sequence ID" value="NZ_CP009780.1"/>
</dbReference>
<dbReference type="SMR" id="B2K532"/>
<dbReference type="GeneID" id="96664225"/>
<dbReference type="KEGG" id="ypb:YPTS_0759"/>
<dbReference type="PATRIC" id="fig|502801.10.peg.90"/>
<dbReference type="UniPathway" id="UPA00028">
    <property type="reaction ID" value="UER00002"/>
</dbReference>
<dbReference type="GO" id="GO:0005829">
    <property type="term" value="C:cytosol"/>
    <property type="evidence" value="ECO:0007669"/>
    <property type="project" value="TreeGrafter"/>
</dbReference>
<dbReference type="GO" id="GO:0004068">
    <property type="term" value="F:aspartate 1-decarboxylase activity"/>
    <property type="evidence" value="ECO:0007669"/>
    <property type="project" value="UniProtKB-UniRule"/>
</dbReference>
<dbReference type="GO" id="GO:0006523">
    <property type="term" value="P:alanine biosynthetic process"/>
    <property type="evidence" value="ECO:0007669"/>
    <property type="project" value="InterPro"/>
</dbReference>
<dbReference type="GO" id="GO:0015940">
    <property type="term" value="P:pantothenate biosynthetic process"/>
    <property type="evidence" value="ECO:0007669"/>
    <property type="project" value="UniProtKB-UniRule"/>
</dbReference>
<dbReference type="CDD" id="cd06919">
    <property type="entry name" value="Asp_decarbox"/>
    <property type="match status" value="1"/>
</dbReference>
<dbReference type="FunFam" id="2.40.40.20:FF:000004">
    <property type="entry name" value="Aspartate 1-decarboxylase"/>
    <property type="match status" value="1"/>
</dbReference>
<dbReference type="Gene3D" id="2.40.40.20">
    <property type="match status" value="1"/>
</dbReference>
<dbReference type="HAMAP" id="MF_00446">
    <property type="entry name" value="PanD"/>
    <property type="match status" value="1"/>
</dbReference>
<dbReference type="InterPro" id="IPR009010">
    <property type="entry name" value="Asp_de-COase-like_dom_sf"/>
</dbReference>
<dbReference type="InterPro" id="IPR003190">
    <property type="entry name" value="Asp_decarbox"/>
</dbReference>
<dbReference type="NCBIfam" id="TIGR00223">
    <property type="entry name" value="panD"/>
    <property type="match status" value="1"/>
</dbReference>
<dbReference type="PANTHER" id="PTHR21012">
    <property type="entry name" value="ASPARTATE 1-DECARBOXYLASE"/>
    <property type="match status" value="1"/>
</dbReference>
<dbReference type="PANTHER" id="PTHR21012:SF0">
    <property type="entry name" value="ASPARTATE 1-DECARBOXYLASE"/>
    <property type="match status" value="1"/>
</dbReference>
<dbReference type="Pfam" id="PF02261">
    <property type="entry name" value="Asp_decarbox"/>
    <property type="match status" value="1"/>
</dbReference>
<dbReference type="PIRSF" id="PIRSF006246">
    <property type="entry name" value="Asp_decarbox"/>
    <property type="match status" value="1"/>
</dbReference>
<dbReference type="SUPFAM" id="SSF50692">
    <property type="entry name" value="ADC-like"/>
    <property type="match status" value="1"/>
</dbReference>
<gene>
    <name evidence="1" type="primary">panD</name>
    <name type="ordered locus">YPTS_0759</name>
</gene>
<comment type="function">
    <text evidence="1">Catalyzes the pyruvoyl-dependent decarboxylation of aspartate to produce beta-alanine.</text>
</comment>
<comment type="catalytic activity">
    <reaction evidence="1">
        <text>L-aspartate + H(+) = beta-alanine + CO2</text>
        <dbReference type="Rhea" id="RHEA:19497"/>
        <dbReference type="ChEBI" id="CHEBI:15378"/>
        <dbReference type="ChEBI" id="CHEBI:16526"/>
        <dbReference type="ChEBI" id="CHEBI:29991"/>
        <dbReference type="ChEBI" id="CHEBI:57966"/>
        <dbReference type="EC" id="4.1.1.11"/>
    </reaction>
</comment>
<comment type="cofactor">
    <cofactor evidence="1">
        <name>pyruvate</name>
        <dbReference type="ChEBI" id="CHEBI:15361"/>
    </cofactor>
    <text evidence="1">Binds 1 pyruvoyl group covalently per subunit.</text>
</comment>
<comment type="pathway">
    <text evidence="1">Cofactor biosynthesis; (R)-pantothenate biosynthesis; beta-alanine from L-aspartate: step 1/1.</text>
</comment>
<comment type="subunit">
    <text evidence="1">Heterooctamer of four alpha and four beta subunits.</text>
</comment>
<comment type="subcellular location">
    <subcellularLocation>
        <location evidence="1">Cytoplasm</location>
    </subcellularLocation>
</comment>
<comment type="PTM">
    <text evidence="1">Is synthesized initially as an inactive proenzyme, which is activated by self-cleavage at a specific serine bond to produce a beta-subunit with a hydroxyl group at its C-terminus and an alpha-subunit with a pyruvoyl group at its N-terminus.</text>
</comment>
<comment type="similarity">
    <text evidence="1">Belongs to the PanD family.</text>
</comment>
<feature type="chain" id="PRO_1000192067" description="Aspartate 1-decarboxylase beta chain" evidence="1">
    <location>
        <begin position="1"/>
        <end position="24"/>
    </location>
</feature>
<feature type="chain" id="PRO_1000192068" description="Aspartate 1-decarboxylase alpha chain" evidence="1">
    <location>
        <begin position="25"/>
        <end position="126"/>
    </location>
</feature>
<feature type="active site" description="Schiff-base intermediate with substrate; via pyruvic acid" evidence="1">
    <location>
        <position position="25"/>
    </location>
</feature>
<feature type="active site" description="Proton donor" evidence="1">
    <location>
        <position position="58"/>
    </location>
</feature>
<feature type="binding site" evidence="1">
    <location>
        <position position="57"/>
    </location>
    <ligand>
        <name>substrate</name>
    </ligand>
</feature>
<feature type="binding site" evidence="1">
    <location>
        <begin position="73"/>
        <end position="75"/>
    </location>
    <ligand>
        <name>substrate</name>
    </ligand>
</feature>
<feature type="modified residue" description="Pyruvic acid (Ser)" evidence="1">
    <location>
        <position position="25"/>
    </location>
</feature>
<sequence>MIRTMLQGKLHRVKVTQADLHYEGSCAIDQDFLEAAGILEYEAIDIYNVDNGQRFSTYAIAAERGSRIISVNGAAARCACVGDKLIICSYVQMSDAAARLHHPKVAYFEGENQLQRKAKAVPVQVA</sequence>
<name>PAND_YERPB</name>
<keyword id="KW-0068">Autocatalytic cleavage</keyword>
<keyword id="KW-0963">Cytoplasm</keyword>
<keyword id="KW-0210">Decarboxylase</keyword>
<keyword id="KW-0456">Lyase</keyword>
<keyword id="KW-0566">Pantothenate biosynthesis</keyword>
<keyword id="KW-0670">Pyruvate</keyword>
<keyword id="KW-0704">Schiff base</keyword>
<keyword id="KW-0865">Zymogen</keyword>
<proteinExistence type="inferred from homology"/>
<accession>B2K532</accession>